<reference key="1">
    <citation type="journal article" date="2006" name="PLoS Biol.">
        <title>The genome of deep-sea vent chemolithoautotroph Thiomicrospira crunogena XCL-2.</title>
        <authorList>
            <person name="Scott K.M."/>
            <person name="Sievert S.M."/>
            <person name="Abril F.N."/>
            <person name="Ball L.A."/>
            <person name="Barrett C.J."/>
            <person name="Blake R.A."/>
            <person name="Boller A.J."/>
            <person name="Chain P.S.G."/>
            <person name="Clark J.A."/>
            <person name="Davis C.R."/>
            <person name="Detter C."/>
            <person name="Do K.F."/>
            <person name="Dobrinski K.P."/>
            <person name="Faza B.I."/>
            <person name="Fitzpatrick K.A."/>
            <person name="Freyermuth S.K."/>
            <person name="Harmer T.L."/>
            <person name="Hauser L.J."/>
            <person name="Huegler M."/>
            <person name="Kerfeld C.A."/>
            <person name="Klotz M.G."/>
            <person name="Kong W.W."/>
            <person name="Land M."/>
            <person name="Lapidus A."/>
            <person name="Larimer F.W."/>
            <person name="Longo D.L."/>
            <person name="Lucas S."/>
            <person name="Malfatti S.A."/>
            <person name="Massey S.E."/>
            <person name="Martin D.D."/>
            <person name="McCuddin Z."/>
            <person name="Meyer F."/>
            <person name="Moore J.L."/>
            <person name="Ocampo L.H. Jr."/>
            <person name="Paul J.H."/>
            <person name="Paulsen I.T."/>
            <person name="Reep D.K."/>
            <person name="Ren Q."/>
            <person name="Ross R.L."/>
            <person name="Sato P.Y."/>
            <person name="Thomas P."/>
            <person name="Tinkham L.E."/>
            <person name="Zeruth G.T."/>
        </authorList>
    </citation>
    <scope>NUCLEOTIDE SEQUENCE [LARGE SCALE GENOMIC DNA]</scope>
    <source>
        <strain>DSM 25203 / XCL-2</strain>
    </source>
</reference>
<name>SURE_HYDCU</name>
<dbReference type="EC" id="3.1.3.5" evidence="1"/>
<dbReference type="EMBL" id="CP000109">
    <property type="protein sequence ID" value="ABB41852.1"/>
    <property type="molecule type" value="Genomic_DNA"/>
</dbReference>
<dbReference type="SMR" id="Q31G71"/>
<dbReference type="STRING" id="317025.Tcr_1257"/>
<dbReference type="KEGG" id="tcx:Tcr_1257"/>
<dbReference type="eggNOG" id="COG0496">
    <property type="taxonomic scope" value="Bacteria"/>
</dbReference>
<dbReference type="HOGENOM" id="CLU_045192_1_2_6"/>
<dbReference type="OrthoDB" id="9780815at2"/>
<dbReference type="GO" id="GO:0005737">
    <property type="term" value="C:cytoplasm"/>
    <property type="evidence" value="ECO:0007669"/>
    <property type="project" value="UniProtKB-SubCell"/>
</dbReference>
<dbReference type="GO" id="GO:0008254">
    <property type="term" value="F:3'-nucleotidase activity"/>
    <property type="evidence" value="ECO:0007669"/>
    <property type="project" value="TreeGrafter"/>
</dbReference>
<dbReference type="GO" id="GO:0008253">
    <property type="term" value="F:5'-nucleotidase activity"/>
    <property type="evidence" value="ECO:0007669"/>
    <property type="project" value="UniProtKB-UniRule"/>
</dbReference>
<dbReference type="GO" id="GO:0004309">
    <property type="term" value="F:exopolyphosphatase activity"/>
    <property type="evidence" value="ECO:0007669"/>
    <property type="project" value="TreeGrafter"/>
</dbReference>
<dbReference type="GO" id="GO:0046872">
    <property type="term" value="F:metal ion binding"/>
    <property type="evidence" value="ECO:0007669"/>
    <property type="project" value="UniProtKB-UniRule"/>
</dbReference>
<dbReference type="GO" id="GO:0000166">
    <property type="term" value="F:nucleotide binding"/>
    <property type="evidence" value="ECO:0007669"/>
    <property type="project" value="UniProtKB-KW"/>
</dbReference>
<dbReference type="FunFam" id="3.40.1210.10:FF:000001">
    <property type="entry name" value="5'/3'-nucleotidase SurE"/>
    <property type="match status" value="1"/>
</dbReference>
<dbReference type="Gene3D" id="3.40.1210.10">
    <property type="entry name" value="Survival protein SurE-like phosphatase/nucleotidase"/>
    <property type="match status" value="1"/>
</dbReference>
<dbReference type="HAMAP" id="MF_00060">
    <property type="entry name" value="SurE"/>
    <property type="match status" value="1"/>
</dbReference>
<dbReference type="InterPro" id="IPR030048">
    <property type="entry name" value="SurE"/>
</dbReference>
<dbReference type="InterPro" id="IPR002828">
    <property type="entry name" value="SurE-like_Pase/nucleotidase"/>
</dbReference>
<dbReference type="InterPro" id="IPR036523">
    <property type="entry name" value="SurE-like_sf"/>
</dbReference>
<dbReference type="NCBIfam" id="NF001489">
    <property type="entry name" value="PRK00346.1-3"/>
    <property type="match status" value="1"/>
</dbReference>
<dbReference type="NCBIfam" id="NF001490">
    <property type="entry name" value="PRK00346.1-4"/>
    <property type="match status" value="1"/>
</dbReference>
<dbReference type="NCBIfam" id="TIGR00087">
    <property type="entry name" value="surE"/>
    <property type="match status" value="1"/>
</dbReference>
<dbReference type="PANTHER" id="PTHR30457">
    <property type="entry name" value="5'-NUCLEOTIDASE SURE"/>
    <property type="match status" value="1"/>
</dbReference>
<dbReference type="PANTHER" id="PTHR30457:SF12">
    <property type="entry name" value="5'_3'-NUCLEOTIDASE SURE"/>
    <property type="match status" value="1"/>
</dbReference>
<dbReference type="Pfam" id="PF01975">
    <property type="entry name" value="SurE"/>
    <property type="match status" value="1"/>
</dbReference>
<dbReference type="SUPFAM" id="SSF64167">
    <property type="entry name" value="SurE-like"/>
    <property type="match status" value="1"/>
</dbReference>
<keyword id="KW-0963">Cytoplasm</keyword>
<keyword id="KW-0378">Hydrolase</keyword>
<keyword id="KW-0479">Metal-binding</keyword>
<keyword id="KW-0547">Nucleotide-binding</keyword>
<gene>
    <name evidence="1" type="primary">surE</name>
    <name type="ordered locus">Tcr_1257</name>
</gene>
<sequence>MKILLSNDDGYKAPGIQALWHCLKELNLHSELRLIAPDRNRSAASNSLTLMEPLRITDHGDAIYSVNGTPTDCVHLGINGAMDFQPDMVVSGINAGANMGDDVLYSGTVAAATEGRFLGKPSIAISLCGDQHFETASQVMLELFKNFHELPLDSSTILNINVPDIPYESLKGIQITRLGKRHCSEKVVTTQDPRGNQIYWVGPAGQAEDASEGTDFHAVENGYASVTPLKIDLTHYEMQAVLKGWFENKAL</sequence>
<protein>
    <recommendedName>
        <fullName evidence="1">5'-nucleotidase SurE</fullName>
        <ecNumber evidence="1">3.1.3.5</ecNumber>
    </recommendedName>
    <alternativeName>
        <fullName evidence="1">Nucleoside 5'-monophosphate phosphohydrolase</fullName>
    </alternativeName>
</protein>
<feature type="chain" id="PRO_0000235664" description="5'-nucleotidase SurE">
    <location>
        <begin position="1"/>
        <end position="251"/>
    </location>
</feature>
<feature type="binding site" evidence="1">
    <location>
        <position position="8"/>
    </location>
    <ligand>
        <name>a divalent metal cation</name>
        <dbReference type="ChEBI" id="CHEBI:60240"/>
    </ligand>
</feature>
<feature type="binding site" evidence="1">
    <location>
        <position position="9"/>
    </location>
    <ligand>
        <name>a divalent metal cation</name>
        <dbReference type="ChEBI" id="CHEBI:60240"/>
    </ligand>
</feature>
<feature type="binding site" evidence="1">
    <location>
        <position position="42"/>
    </location>
    <ligand>
        <name>a divalent metal cation</name>
        <dbReference type="ChEBI" id="CHEBI:60240"/>
    </ligand>
</feature>
<feature type="binding site" evidence="1">
    <location>
        <position position="94"/>
    </location>
    <ligand>
        <name>a divalent metal cation</name>
        <dbReference type="ChEBI" id="CHEBI:60240"/>
    </ligand>
</feature>
<organism>
    <name type="scientific">Hydrogenovibrio crunogenus (strain DSM 25203 / XCL-2)</name>
    <name type="common">Thiomicrospira crunogena</name>
    <dbReference type="NCBI Taxonomy" id="317025"/>
    <lineage>
        <taxon>Bacteria</taxon>
        <taxon>Pseudomonadati</taxon>
        <taxon>Pseudomonadota</taxon>
        <taxon>Gammaproteobacteria</taxon>
        <taxon>Thiotrichales</taxon>
        <taxon>Piscirickettsiaceae</taxon>
        <taxon>Hydrogenovibrio</taxon>
    </lineage>
</organism>
<proteinExistence type="inferred from homology"/>
<comment type="function">
    <text evidence="1">Nucleotidase that shows phosphatase activity on nucleoside 5'-monophosphates.</text>
</comment>
<comment type="catalytic activity">
    <reaction evidence="1">
        <text>a ribonucleoside 5'-phosphate + H2O = a ribonucleoside + phosphate</text>
        <dbReference type="Rhea" id="RHEA:12484"/>
        <dbReference type="ChEBI" id="CHEBI:15377"/>
        <dbReference type="ChEBI" id="CHEBI:18254"/>
        <dbReference type="ChEBI" id="CHEBI:43474"/>
        <dbReference type="ChEBI" id="CHEBI:58043"/>
        <dbReference type="EC" id="3.1.3.5"/>
    </reaction>
</comment>
<comment type="cofactor">
    <cofactor evidence="1">
        <name>a divalent metal cation</name>
        <dbReference type="ChEBI" id="CHEBI:60240"/>
    </cofactor>
    <text evidence="1">Binds 1 divalent metal cation per subunit.</text>
</comment>
<comment type="subcellular location">
    <subcellularLocation>
        <location evidence="1">Cytoplasm</location>
    </subcellularLocation>
</comment>
<comment type="similarity">
    <text evidence="1">Belongs to the SurE nucleotidase family.</text>
</comment>
<evidence type="ECO:0000255" key="1">
    <source>
        <dbReference type="HAMAP-Rule" id="MF_00060"/>
    </source>
</evidence>
<accession>Q31G71</accession>